<gene>
    <name evidence="1" type="primary">hisI</name>
    <name type="ordered locus">Paes_0430</name>
</gene>
<protein>
    <recommendedName>
        <fullName evidence="1">Phosphoribosyl-AMP cyclohydrolase</fullName>
        <shortName evidence="1">PRA-CH</shortName>
        <ecNumber evidence="1">3.5.4.19</ecNumber>
    </recommendedName>
</protein>
<accession>B4S4Y9</accession>
<sequence length="137" mass="15753">MSENQDLQKSFLETVKFDDKGLVPAIVQDFETGKVLMMAWMNRQSLEMTLEKKKACYWSRSRQKLWLKGESSGNMQNVHDILIDCDGDTLLLKVSQTGGACHMGYQSCFYRKTKDDLSMEICDTLMFNPEDVYGKQS</sequence>
<evidence type="ECO:0000255" key="1">
    <source>
        <dbReference type="HAMAP-Rule" id="MF_01021"/>
    </source>
</evidence>
<organism>
    <name type="scientific">Prosthecochloris aestuarii (strain DSM 271 / SK 413)</name>
    <dbReference type="NCBI Taxonomy" id="290512"/>
    <lineage>
        <taxon>Bacteria</taxon>
        <taxon>Pseudomonadati</taxon>
        <taxon>Chlorobiota</taxon>
        <taxon>Chlorobiia</taxon>
        <taxon>Chlorobiales</taxon>
        <taxon>Chlorobiaceae</taxon>
        <taxon>Prosthecochloris</taxon>
    </lineage>
</organism>
<name>HIS3_PROA2</name>
<feature type="chain" id="PRO_1000135359" description="Phosphoribosyl-AMP cyclohydrolase">
    <location>
        <begin position="1"/>
        <end position="137"/>
    </location>
</feature>
<feature type="binding site" evidence="1">
    <location>
        <position position="84"/>
    </location>
    <ligand>
        <name>Mg(2+)</name>
        <dbReference type="ChEBI" id="CHEBI:18420"/>
    </ligand>
</feature>
<feature type="binding site" evidence="1">
    <location>
        <position position="85"/>
    </location>
    <ligand>
        <name>Zn(2+)</name>
        <dbReference type="ChEBI" id="CHEBI:29105"/>
        <note>ligand shared between dimeric partners</note>
    </ligand>
</feature>
<feature type="binding site" evidence="1">
    <location>
        <position position="86"/>
    </location>
    <ligand>
        <name>Mg(2+)</name>
        <dbReference type="ChEBI" id="CHEBI:18420"/>
    </ligand>
</feature>
<feature type="binding site" evidence="1">
    <location>
        <position position="88"/>
    </location>
    <ligand>
        <name>Mg(2+)</name>
        <dbReference type="ChEBI" id="CHEBI:18420"/>
    </ligand>
</feature>
<feature type="binding site" evidence="1">
    <location>
        <position position="101"/>
    </location>
    <ligand>
        <name>Zn(2+)</name>
        <dbReference type="ChEBI" id="CHEBI:29105"/>
        <note>ligand shared between dimeric partners</note>
    </ligand>
</feature>
<feature type="binding site" evidence="1">
    <location>
        <position position="108"/>
    </location>
    <ligand>
        <name>Zn(2+)</name>
        <dbReference type="ChEBI" id="CHEBI:29105"/>
        <note>ligand shared between dimeric partners</note>
    </ligand>
</feature>
<dbReference type="EC" id="3.5.4.19" evidence="1"/>
<dbReference type="EMBL" id="CP001108">
    <property type="protein sequence ID" value="ACF45487.1"/>
    <property type="molecule type" value="Genomic_DNA"/>
</dbReference>
<dbReference type="RefSeq" id="WP_012505024.1">
    <property type="nucleotide sequence ID" value="NC_011059.1"/>
</dbReference>
<dbReference type="SMR" id="B4S4Y9"/>
<dbReference type="STRING" id="290512.Paes_0430"/>
<dbReference type="KEGG" id="paa:Paes_0430"/>
<dbReference type="eggNOG" id="COG0139">
    <property type="taxonomic scope" value="Bacteria"/>
</dbReference>
<dbReference type="HOGENOM" id="CLU_048577_5_0_10"/>
<dbReference type="UniPathway" id="UPA00031">
    <property type="reaction ID" value="UER00008"/>
</dbReference>
<dbReference type="Proteomes" id="UP000002725">
    <property type="component" value="Chromosome"/>
</dbReference>
<dbReference type="GO" id="GO:0005737">
    <property type="term" value="C:cytoplasm"/>
    <property type="evidence" value="ECO:0007669"/>
    <property type="project" value="UniProtKB-SubCell"/>
</dbReference>
<dbReference type="GO" id="GO:0000287">
    <property type="term" value="F:magnesium ion binding"/>
    <property type="evidence" value="ECO:0007669"/>
    <property type="project" value="UniProtKB-UniRule"/>
</dbReference>
<dbReference type="GO" id="GO:0004635">
    <property type="term" value="F:phosphoribosyl-AMP cyclohydrolase activity"/>
    <property type="evidence" value="ECO:0007669"/>
    <property type="project" value="UniProtKB-UniRule"/>
</dbReference>
<dbReference type="GO" id="GO:0008270">
    <property type="term" value="F:zinc ion binding"/>
    <property type="evidence" value="ECO:0007669"/>
    <property type="project" value="UniProtKB-UniRule"/>
</dbReference>
<dbReference type="GO" id="GO:0000105">
    <property type="term" value="P:L-histidine biosynthetic process"/>
    <property type="evidence" value="ECO:0007669"/>
    <property type="project" value="UniProtKB-UniRule"/>
</dbReference>
<dbReference type="FunFam" id="3.10.20.810:FF:000001">
    <property type="entry name" value="Histidine biosynthesis bifunctional protein HisIE"/>
    <property type="match status" value="1"/>
</dbReference>
<dbReference type="Gene3D" id="3.10.20.810">
    <property type="entry name" value="Phosphoribosyl-AMP cyclohydrolase"/>
    <property type="match status" value="1"/>
</dbReference>
<dbReference type="HAMAP" id="MF_01021">
    <property type="entry name" value="HisI"/>
    <property type="match status" value="1"/>
</dbReference>
<dbReference type="InterPro" id="IPR026660">
    <property type="entry name" value="PRA-CH"/>
</dbReference>
<dbReference type="InterPro" id="IPR002496">
    <property type="entry name" value="PRib_AMP_CycHydrolase_dom"/>
</dbReference>
<dbReference type="InterPro" id="IPR038019">
    <property type="entry name" value="PRib_AMP_CycHydrolase_sf"/>
</dbReference>
<dbReference type="NCBIfam" id="NF000768">
    <property type="entry name" value="PRK00051.1"/>
    <property type="match status" value="1"/>
</dbReference>
<dbReference type="PANTHER" id="PTHR42945">
    <property type="entry name" value="HISTIDINE BIOSYNTHESIS BIFUNCTIONAL PROTEIN"/>
    <property type="match status" value="1"/>
</dbReference>
<dbReference type="PANTHER" id="PTHR42945:SF1">
    <property type="entry name" value="HISTIDINE BIOSYNTHESIS BIFUNCTIONAL PROTEIN HIS7"/>
    <property type="match status" value="1"/>
</dbReference>
<dbReference type="Pfam" id="PF01502">
    <property type="entry name" value="PRA-CH"/>
    <property type="match status" value="1"/>
</dbReference>
<dbReference type="SUPFAM" id="SSF141734">
    <property type="entry name" value="HisI-like"/>
    <property type="match status" value="1"/>
</dbReference>
<comment type="function">
    <text evidence="1">Catalyzes the hydrolysis of the adenine ring of phosphoribosyl-AMP.</text>
</comment>
<comment type="catalytic activity">
    <reaction evidence="1">
        <text>1-(5-phospho-beta-D-ribosyl)-5'-AMP + H2O = 1-(5-phospho-beta-D-ribosyl)-5-[(5-phospho-beta-D-ribosylamino)methylideneamino]imidazole-4-carboxamide</text>
        <dbReference type="Rhea" id="RHEA:20049"/>
        <dbReference type="ChEBI" id="CHEBI:15377"/>
        <dbReference type="ChEBI" id="CHEBI:58435"/>
        <dbReference type="ChEBI" id="CHEBI:59457"/>
        <dbReference type="EC" id="3.5.4.19"/>
    </reaction>
</comment>
<comment type="cofactor">
    <cofactor evidence="1">
        <name>Mg(2+)</name>
        <dbReference type="ChEBI" id="CHEBI:18420"/>
    </cofactor>
    <text evidence="1">Binds 1 Mg(2+) ion per subunit.</text>
</comment>
<comment type="cofactor">
    <cofactor evidence="1">
        <name>Zn(2+)</name>
        <dbReference type="ChEBI" id="CHEBI:29105"/>
    </cofactor>
    <text evidence="1">Binds 1 zinc ion per subunit.</text>
</comment>
<comment type="pathway">
    <text evidence="1">Amino-acid biosynthesis; L-histidine biosynthesis; L-histidine from 5-phospho-alpha-D-ribose 1-diphosphate: step 3/9.</text>
</comment>
<comment type="subunit">
    <text evidence="1">Homodimer.</text>
</comment>
<comment type="subcellular location">
    <subcellularLocation>
        <location evidence="1">Cytoplasm</location>
    </subcellularLocation>
</comment>
<comment type="similarity">
    <text evidence="1">Belongs to the PRA-CH family.</text>
</comment>
<reference key="1">
    <citation type="submission" date="2008-06" db="EMBL/GenBank/DDBJ databases">
        <title>Complete sequence of chromosome of Prosthecochloris aestuarii DSM 271.</title>
        <authorList>
            <consortium name="US DOE Joint Genome Institute"/>
            <person name="Lucas S."/>
            <person name="Copeland A."/>
            <person name="Lapidus A."/>
            <person name="Glavina del Rio T."/>
            <person name="Dalin E."/>
            <person name="Tice H."/>
            <person name="Bruce D."/>
            <person name="Goodwin L."/>
            <person name="Pitluck S."/>
            <person name="Schmutz J."/>
            <person name="Larimer F."/>
            <person name="Land M."/>
            <person name="Hauser L."/>
            <person name="Kyrpides N."/>
            <person name="Anderson I."/>
            <person name="Liu Z."/>
            <person name="Li T."/>
            <person name="Zhao F."/>
            <person name="Overmann J."/>
            <person name="Bryant D.A."/>
            <person name="Richardson P."/>
        </authorList>
    </citation>
    <scope>NUCLEOTIDE SEQUENCE [LARGE SCALE GENOMIC DNA]</scope>
    <source>
        <strain>DSM 271 / SK 413</strain>
    </source>
</reference>
<proteinExistence type="inferred from homology"/>
<keyword id="KW-0028">Amino-acid biosynthesis</keyword>
<keyword id="KW-0963">Cytoplasm</keyword>
<keyword id="KW-0368">Histidine biosynthesis</keyword>
<keyword id="KW-0378">Hydrolase</keyword>
<keyword id="KW-0460">Magnesium</keyword>
<keyword id="KW-0479">Metal-binding</keyword>
<keyword id="KW-0862">Zinc</keyword>